<feature type="chain" id="PRO_0000432764" description="Protein CDC73 homolog">
    <location>
        <begin position="1"/>
        <end position="415"/>
    </location>
</feature>
<comment type="function">
    <text evidence="1 2">Component of the PAF1 complex (PAF1C) which is involved in histone modifications such as methylation on histone H3 'Lys-4' (H3K4me3) (PubMed:20363855). Involved in regulation of flowering time. Required for the expression of the flowering repressors FLC and MADS-box genes of the MAF family. Required for histone H3 trimethylation on 'Lys-4' (H3K4me3) at the FLC locus (PubMed:20363855, PubMed:20463090). Prevents trimethylation on 'Lys-27' (H3K27me3) at the same locus (PubMed:20363855).</text>
</comment>
<comment type="subunit">
    <text evidence="1">Component of the nuclear PAF1 complex (PAF1C), which consists of VIP2/ELF7/PAF1, VIP3/SKI8/WDR61, VIP4/LEO1, VIP5/RTF1, VIP6/ELF8/CTR9 and CDC73.</text>
</comment>
<comment type="subcellular location">
    <subcellularLocation>
        <location evidence="1 2">Nucleus</location>
    </subcellularLocation>
</comment>
<comment type="tissue specificity">
    <text evidence="2">Expressed in root tips, shoot apex, young leaves and flowers, especially in stamen filaments and carpels.</text>
</comment>
<comment type="disruption phenotype">
    <text evidence="1 2">Early flowering.</text>
</comment>
<comment type="similarity">
    <text evidence="5">Belongs to the CDC73 family.</text>
</comment>
<keyword id="KW-0287">Flowering</keyword>
<keyword id="KW-0539">Nucleus</keyword>
<keyword id="KW-1185">Reference proteome</keyword>
<keyword id="KW-0804">Transcription</keyword>
<keyword id="KW-0805">Transcription regulation</keyword>
<sequence length="415" mass="47544">MDPLSVLKEFTIRGDIDKIERVGANYRFGSEYSFPCATETAYRSKSGSLYTLEALVHYVKNQQLKHGEYMQSTVKNSVPAVTLPDRKPLLDYLTGRVASSDSIDFLLLQQQNAQSQKQNEEYRPDQDNSAFVSRENAIADMEVEDFGKSGEDVDYIMLIRSNERPLKSRDAILQCKNRDFYSVLVNSTKREEERQRIESHQRKDGLVAKSRLMGAEERGIVGFSSGGGDDNGYDANPKSKLHFKAGKIGEGVPIILVPSAFQTLITIYNVKEFLEDGVYIPNDVKAKEMKGLKPDCITVQKKFSRDRERVVTAYEVRDKPSALKPDDWDRVVAVFVLGKDWQFKDWPFKDHVEIFNKIIGFFLRFEDDSIESAKTVKQWNVKIISISKNKRHQDRAAALEVWEKLEEFVRSRSHS</sequence>
<gene>
    <name evidence="4" type="primary">CDC73</name>
    <name evidence="3" type="synonym">PHP</name>
    <name evidence="6" type="ordered locus">At3g22590</name>
    <name evidence="7" type="ORF">F16J14.15</name>
</gene>
<evidence type="ECO:0000269" key="1">
    <source>
    </source>
</evidence>
<evidence type="ECO:0000269" key="2">
    <source>
    </source>
</evidence>
<evidence type="ECO:0000303" key="3">
    <source>
    </source>
</evidence>
<evidence type="ECO:0000303" key="4">
    <source>
    </source>
</evidence>
<evidence type="ECO:0000305" key="5"/>
<evidence type="ECO:0000312" key="6">
    <source>
        <dbReference type="Araport" id="AT3G22590"/>
    </source>
</evidence>
<evidence type="ECO:0000312" key="7">
    <source>
        <dbReference type="EMBL" id="BAB01474.1"/>
    </source>
</evidence>
<proteinExistence type="evidence at protein level"/>
<accession>Q9LJ87</accession>
<dbReference type="EMBL" id="AP000731">
    <property type="protein sequence ID" value="BAB01474.1"/>
    <property type="molecule type" value="Genomic_DNA"/>
</dbReference>
<dbReference type="EMBL" id="CP002686">
    <property type="protein sequence ID" value="AEE76656.1"/>
    <property type="molecule type" value="Genomic_DNA"/>
</dbReference>
<dbReference type="EMBL" id="AY065437">
    <property type="protein sequence ID" value="AAL38878.1"/>
    <property type="molecule type" value="mRNA"/>
</dbReference>
<dbReference type="EMBL" id="AY142611">
    <property type="protein sequence ID" value="AAN13180.1"/>
    <property type="molecule type" value="mRNA"/>
</dbReference>
<dbReference type="RefSeq" id="NP_188898.1">
    <property type="nucleotide sequence ID" value="NM_113158.3"/>
</dbReference>
<dbReference type="SMR" id="Q9LJ87"/>
<dbReference type="FunCoup" id="Q9LJ87">
    <property type="interactions" value="4298"/>
</dbReference>
<dbReference type="STRING" id="3702.Q9LJ87"/>
<dbReference type="PaxDb" id="3702-AT3G22590.1"/>
<dbReference type="ProteomicsDB" id="224388"/>
<dbReference type="EnsemblPlants" id="AT3G22590.1">
    <property type="protein sequence ID" value="AT3G22590.1"/>
    <property type="gene ID" value="AT3G22590"/>
</dbReference>
<dbReference type="GeneID" id="821831"/>
<dbReference type="Gramene" id="AT3G22590.1">
    <property type="protein sequence ID" value="AT3G22590.1"/>
    <property type="gene ID" value="AT3G22590"/>
</dbReference>
<dbReference type="KEGG" id="ath:AT3G22590"/>
<dbReference type="Araport" id="AT3G22590"/>
<dbReference type="TAIR" id="AT3G22590">
    <property type="gene designation" value="PHP"/>
</dbReference>
<dbReference type="eggNOG" id="KOG3786">
    <property type="taxonomic scope" value="Eukaryota"/>
</dbReference>
<dbReference type="HOGENOM" id="CLU_025849_3_0_1"/>
<dbReference type="InParanoid" id="Q9LJ87"/>
<dbReference type="OMA" id="CAFHLKY"/>
<dbReference type="PhylomeDB" id="Q9LJ87"/>
<dbReference type="PRO" id="PR:Q9LJ87"/>
<dbReference type="Proteomes" id="UP000006548">
    <property type="component" value="Chromosome 3"/>
</dbReference>
<dbReference type="ExpressionAtlas" id="Q9LJ87">
    <property type="expression patterns" value="baseline and differential"/>
</dbReference>
<dbReference type="GO" id="GO:0016593">
    <property type="term" value="C:Cdc73/Paf1 complex"/>
    <property type="evidence" value="ECO:0000314"/>
    <property type="project" value="UniProtKB"/>
</dbReference>
<dbReference type="GO" id="GO:0005634">
    <property type="term" value="C:nucleus"/>
    <property type="evidence" value="ECO:0000314"/>
    <property type="project" value="UniProtKB"/>
</dbReference>
<dbReference type="GO" id="GO:0009908">
    <property type="term" value="P:flower development"/>
    <property type="evidence" value="ECO:0007669"/>
    <property type="project" value="UniProtKB-KW"/>
</dbReference>
<dbReference type="GO" id="GO:0009911">
    <property type="term" value="P:positive regulation of flower development"/>
    <property type="evidence" value="ECO:0000315"/>
    <property type="project" value="TAIR"/>
</dbReference>
<dbReference type="GO" id="GO:0006368">
    <property type="term" value="P:transcription elongation by RNA polymerase II"/>
    <property type="evidence" value="ECO:0007669"/>
    <property type="project" value="InterPro"/>
</dbReference>
<dbReference type="GO" id="GO:0010228">
    <property type="term" value="P:vegetative to reproductive phase transition of meristem"/>
    <property type="evidence" value="ECO:0000315"/>
    <property type="project" value="TAIR"/>
</dbReference>
<dbReference type="FunFam" id="3.40.50.11990:FF:000002">
    <property type="entry name" value="protein CDC73 homolog"/>
    <property type="match status" value="1"/>
</dbReference>
<dbReference type="Gene3D" id="3.40.50.11990">
    <property type="entry name" value="RNA polymerase II accessory factor, Cdc73 C-terminal domain"/>
    <property type="match status" value="1"/>
</dbReference>
<dbReference type="InterPro" id="IPR007852">
    <property type="entry name" value="Cdc73/Parafibromin"/>
</dbReference>
<dbReference type="InterPro" id="IPR031336">
    <property type="entry name" value="CDC73_C"/>
</dbReference>
<dbReference type="InterPro" id="IPR038103">
    <property type="entry name" value="CDC73_C_sf"/>
</dbReference>
<dbReference type="InterPro" id="IPR032041">
    <property type="entry name" value="Cdc73_N"/>
</dbReference>
<dbReference type="PANTHER" id="PTHR12466">
    <property type="entry name" value="CDC73 DOMAIN PROTEIN"/>
    <property type="match status" value="1"/>
</dbReference>
<dbReference type="PANTHER" id="PTHR12466:SF8">
    <property type="entry name" value="PARAFIBROMIN"/>
    <property type="match status" value="1"/>
</dbReference>
<dbReference type="Pfam" id="PF05179">
    <property type="entry name" value="CDC73_C"/>
    <property type="match status" value="1"/>
</dbReference>
<dbReference type="Pfam" id="PF16050">
    <property type="entry name" value="CDC73_N"/>
    <property type="match status" value="1"/>
</dbReference>
<reference key="1">
    <citation type="journal article" date="2000" name="DNA Res.">
        <title>Structural analysis of Arabidopsis thaliana chromosome 3. II. Sequence features of the 4,251,695 bp regions covered by 90 P1, TAC and BAC clones.</title>
        <authorList>
            <person name="Kaneko T."/>
            <person name="Katoh T."/>
            <person name="Sato S."/>
            <person name="Nakamura Y."/>
            <person name="Asamizu E."/>
            <person name="Tabata S."/>
        </authorList>
    </citation>
    <scope>NUCLEOTIDE SEQUENCE [LARGE SCALE GENOMIC DNA]</scope>
    <source>
        <strain>cv. Columbia</strain>
    </source>
</reference>
<reference key="2">
    <citation type="journal article" date="2017" name="Plant J.">
        <title>Araport11: a complete reannotation of the Arabidopsis thaliana reference genome.</title>
        <authorList>
            <person name="Cheng C.Y."/>
            <person name="Krishnakumar V."/>
            <person name="Chan A.P."/>
            <person name="Thibaud-Nissen F."/>
            <person name="Schobel S."/>
            <person name="Town C.D."/>
        </authorList>
    </citation>
    <scope>GENOME REANNOTATION</scope>
    <source>
        <strain>cv. Columbia</strain>
    </source>
</reference>
<reference key="3">
    <citation type="journal article" date="2003" name="Science">
        <title>Empirical analysis of transcriptional activity in the Arabidopsis genome.</title>
        <authorList>
            <person name="Yamada K."/>
            <person name="Lim J."/>
            <person name="Dale J.M."/>
            <person name="Chen H."/>
            <person name="Shinn P."/>
            <person name="Palm C.J."/>
            <person name="Southwick A.M."/>
            <person name="Wu H.C."/>
            <person name="Kim C.J."/>
            <person name="Nguyen M."/>
            <person name="Pham P.K."/>
            <person name="Cheuk R.F."/>
            <person name="Karlin-Newmann G."/>
            <person name="Liu S.X."/>
            <person name="Lam B."/>
            <person name="Sakano H."/>
            <person name="Wu T."/>
            <person name="Yu G."/>
            <person name="Miranda M."/>
            <person name="Quach H.L."/>
            <person name="Tripp M."/>
            <person name="Chang C.H."/>
            <person name="Lee J.M."/>
            <person name="Toriumi M.J."/>
            <person name="Chan M.M."/>
            <person name="Tang C.C."/>
            <person name="Onodera C.S."/>
            <person name="Deng J.M."/>
            <person name="Akiyama K."/>
            <person name="Ansari Y."/>
            <person name="Arakawa T."/>
            <person name="Banh J."/>
            <person name="Banno F."/>
            <person name="Bowser L."/>
            <person name="Brooks S.Y."/>
            <person name="Carninci P."/>
            <person name="Chao Q."/>
            <person name="Choy N."/>
            <person name="Enju A."/>
            <person name="Goldsmith A.D."/>
            <person name="Gurjal M."/>
            <person name="Hansen N.F."/>
            <person name="Hayashizaki Y."/>
            <person name="Johnson-Hopson C."/>
            <person name="Hsuan V.W."/>
            <person name="Iida K."/>
            <person name="Karnes M."/>
            <person name="Khan S."/>
            <person name="Koesema E."/>
            <person name="Ishida J."/>
            <person name="Jiang P.X."/>
            <person name="Jones T."/>
            <person name="Kawai J."/>
            <person name="Kamiya A."/>
            <person name="Meyers C."/>
            <person name="Nakajima M."/>
            <person name="Narusaka M."/>
            <person name="Seki M."/>
            <person name="Sakurai T."/>
            <person name="Satou M."/>
            <person name="Tamse R."/>
            <person name="Vaysberg M."/>
            <person name="Wallender E.K."/>
            <person name="Wong C."/>
            <person name="Yamamura Y."/>
            <person name="Yuan S."/>
            <person name="Shinozaki K."/>
            <person name="Davis R.W."/>
            <person name="Theologis A."/>
            <person name="Ecker J.R."/>
        </authorList>
    </citation>
    <scope>NUCLEOTIDE SEQUENCE [LARGE SCALE MRNA]</scope>
    <source>
        <strain>cv. Columbia</strain>
    </source>
</reference>
<reference key="4">
    <citation type="journal article" date="2010" name="Plant Physiol.">
        <title>PLANT HOMOLOGOUS TO PARAFIBROMIN is a component of the PAF1 complex and assists in regulating expression of genes within H3K27ME3-enriched chromatin.</title>
        <authorList>
            <person name="Park S."/>
            <person name="Oh S."/>
            <person name="Ek-Ramos J."/>
            <person name="van Nocker S."/>
        </authorList>
    </citation>
    <scope>IDENTIFICATION IN THE PAF1 COMPLEX</scope>
    <scope>FUNCTION</scope>
    <scope>SUBCELLULAR LOCATION</scope>
    <scope>DISRUPTION PHENOTYPE</scope>
</reference>
<reference key="5">
    <citation type="journal article" date="2010" name="Plant Physiol.">
        <title>The Arabidopsis Paf1c complex component CDC73 participates in the modification of FLOWERING LOCUS C chromatin.</title>
        <authorList>
            <person name="Yu X."/>
            <person name="Michaels S.D."/>
        </authorList>
    </citation>
    <scope>FUNCTION</scope>
    <scope>SUBCELLULAR LOCATION</scope>
    <scope>DISRUPTION PHENOTYPE</scope>
</reference>
<reference key="6">
    <citation type="journal article" date="2012" name="PLoS Genet.">
        <title>Context-dependent dual role of SKI8 homologs in mRNA synthesis and turnover.</title>
        <authorList>
            <person name="Dorcey E."/>
            <person name="Rodriguez-Villalon A."/>
            <person name="Salinas P."/>
            <person name="Santuari L."/>
            <person name="Pradervand S."/>
            <person name="Harshman K."/>
            <person name="Hardtke C.S."/>
        </authorList>
    </citation>
    <scope>IDENTIFICATION BY MASS SPECTROMETRY</scope>
</reference>
<organism>
    <name type="scientific">Arabidopsis thaliana</name>
    <name type="common">Mouse-ear cress</name>
    <dbReference type="NCBI Taxonomy" id="3702"/>
    <lineage>
        <taxon>Eukaryota</taxon>
        <taxon>Viridiplantae</taxon>
        <taxon>Streptophyta</taxon>
        <taxon>Embryophyta</taxon>
        <taxon>Tracheophyta</taxon>
        <taxon>Spermatophyta</taxon>
        <taxon>Magnoliopsida</taxon>
        <taxon>eudicotyledons</taxon>
        <taxon>Gunneridae</taxon>
        <taxon>Pentapetalae</taxon>
        <taxon>rosids</taxon>
        <taxon>malvids</taxon>
        <taxon>Brassicales</taxon>
        <taxon>Brassicaceae</taxon>
        <taxon>Camelineae</taxon>
        <taxon>Arabidopsis</taxon>
    </lineage>
</organism>
<protein>
    <recommendedName>
        <fullName evidence="4">Protein CDC73 homolog</fullName>
    </recommendedName>
    <alternativeName>
        <fullName evidence="3">Protein PLANT HOMOLOGOUS TO PARAFIBROMIN</fullName>
    </alternativeName>
</protein>
<name>CDC73_ARATH</name>